<reference key="1">
    <citation type="journal article" date="2009" name="PLoS ONE">
        <title>Genome sequence of the endosymbiont Rickettsia peacockii and comparison with virulent Rickettsia rickettsii: identification of virulence factors.</title>
        <authorList>
            <person name="Felsheim R.F."/>
            <person name="Kurtti T.J."/>
            <person name="Munderloh U.G."/>
        </authorList>
    </citation>
    <scope>NUCLEOTIDE SEQUENCE [LARGE SCALE GENOMIC DNA]</scope>
    <source>
        <strain>Rustic</strain>
    </source>
</reference>
<evidence type="ECO:0000255" key="1">
    <source>
        <dbReference type="HAMAP-Rule" id="MF_00480"/>
    </source>
</evidence>
<evidence type="ECO:0000305" key="2"/>
<feature type="chain" id="PRO_1000206415" description="Small ribosomal subunit protein uS7">
    <location>
        <begin position="1"/>
        <end position="160"/>
    </location>
</feature>
<proteinExistence type="inferred from homology"/>
<sequence length="160" mass="18442">MSRRHAAEKRVILPDMKYNSILLSRFINNIMKEGKKALAEKIVYSAFNKIEKKHRVDPYQTFNNAMHNVKPHLEVTSVRVGGANYQVPTHVDERRGYALASRWIINAASKRSEKMMIDKLAEELFEASNNRGVAIKKKEDTHKMAEANKAFSHFSPKKMK</sequence>
<organism>
    <name type="scientific">Rickettsia peacockii (strain Rustic)</name>
    <dbReference type="NCBI Taxonomy" id="562019"/>
    <lineage>
        <taxon>Bacteria</taxon>
        <taxon>Pseudomonadati</taxon>
        <taxon>Pseudomonadota</taxon>
        <taxon>Alphaproteobacteria</taxon>
        <taxon>Rickettsiales</taxon>
        <taxon>Rickettsiaceae</taxon>
        <taxon>Rickettsieae</taxon>
        <taxon>Rickettsia</taxon>
        <taxon>spotted fever group</taxon>
    </lineage>
</organism>
<keyword id="KW-0687">Ribonucleoprotein</keyword>
<keyword id="KW-0689">Ribosomal protein</keyword>
<keyword id="KW-0694">RNA-binding</keyword>
<keyword id="KW-0699">rRNA-binding</keyword>
<keyword id="KW-0820">tRNA-binding</keyword>
<protein>
    <recommendedName>
        <fullName evidence="1">Small ribosomal subunit protein uS7</fullName>
    </recommendedName>
    <alternativeName>
        <fullName evidence="2">30S ribosomal protein S7</fullName>
    </alternativeName>
</protein>
<name>RS7_RICPU</name>
<comment type="function">
    <text evidence="1">One of the primary rRNA binding proteins, it binds directly to 16S rRNA where it nucleates assembly of the head domain of the 30S subunit. Is located at the subunit interface close to the decoding center, probably blocks exit of the E-site tRNA.</text>
</comment>
<comment type="subunit">
    <text evidence="1">Part of the 30S ribosomal subunit. Contacts proteins S9 and S11.</text>
</comment>
<comment type="similarity">
    <text evidence="1">Belongs to the universal ribosomal protein uS7 family.</text>
</comment>
<gene>
    <name evidence="1" type="primary">rpsG</name>
    <name type="ordered locus">RPR_03995</name>
</gene>
<accession>C4K1P7</accession>
<dbReference type="EMBL" id="CP001227">
    <property type="protein sequence ID" value="ACR47497.1"/>
    <property type="molecule type" value="Genomic_DNA"/>
</dbReference>
<dbReference type="RefSeq" id="WP_004996646.1">
    <property type="nucleotide sequence ID" value="NC_012730.1"/>
</dbReference>
<dbReference type="SMR" id="C4K1P7"/>
<dbReference type="GeneID" id="95361888"/>
<dbReference type="KEGG" id="rpk:RPR_03995"/>
<dbReference type="HOGENOM" id="CLU_072226_1_1_5"/>
<dbReference type="Proteomes" id="UP000005015">
    <property type="component" value="Chromosome"/>
</dbReference>
<dbReference type="GO" id="GO:0015935">
    <property type="term" value="C:small ribosomal subunit"/>
    <property type="evidence" value="ECO:0007669"/>
    <property type="project" value="InterPro"/>
</dbReference>
<dbReference type="GO" id="GO:0019843">
    <property type="term" value="F:rRNA binding"/>
    <property type="evidence" value="ECO:0007669"/>
    <property type="project" value="UniProtKB-UniRule"/>
</dbReference>
<dbReference type="GO" id="GO:0003735">
    <property type="term" value="F:structural constituent of ribosome"/>
    <property type="evidence" value="ECO:0007669"/>
    <property type="project" value="InterPro"/>
</dbReference>
<dbReference type="GO" id="GO:0000049">
    <property type="term" value="F:tRNA binding"/>
    <property type="evidence" value="ECO:0007669"/>
    <property type="project" value="UniProtKB-UniRule"/>
</dbReference>
<dbReference type="GO" id="GO:0006412">
    <property type="term" value="P:translation"/>
    <property type="evidence" value="ECO:0007669"/>
    <property type="project" value="UniProtKB-UniRule"/>
</dbReference>
<dbReference type="CDD" id="cd14869">
    <property type="entry name" value="uS7_Bacteria"/>
    <property type="match status" value="1"/>
</dbReference>
<dbReference type="FunFam" id="1.10.455.10:FF:000001">
    <property type="entry name" value="30S ribosomal protein S7"/>
    <property type="match status" value="1"/>
</dbReference>
<dbReference type="Gene3D" id="1.10.455.10">
    <property type="entry name" value="Ribosomal protein S7 domain"/>
    <property type="match status" value="1"/>
</dbReference>
<dbReference type="HAMAP" id="MF_00480_B">
    <property type="entry name" value="Ribosomal_uS7_B"/>
    <property type="match status" value="1"/>
</dbReference>
<dbReference type="InterPro" id="IPR000235">
    <property type="entry name" value="Ribosomal_uS7"/>
</dbReference>
<dbReference type="InterPro" id="IPR005717">
    <property type="entry name" value="Ribosomal_uS7_bac/org-type"/>
</dbReference>
<dbReference type="InterPro" id="IPR020606">
    <property type="entry name" value="Ribosomal_uS7_CS"/>
</dbReference>
<dbReference type="InterPro" id="IPR023798">
    <property type="entry name" value="Ribosomal_uS7_dom"/>
</dbReference>
<dbReference type="InterPro" id="IPR036823">
    <property type="entry name" value="Ribosomal_uS7_dom_sf"/>
</dbReference>
<dbReference type="NCBIfam" id="TIGR01029">
    <property type="entry name" value="rpsG_bact"/>
    <property type="match status" value="1"/>
</dbReference>
<dbReference type="PANTHER" id="PTHR11205">
    <property type="entry name" value="RIBOSOMAL PROTEIN S7"/>
    <property type="match status" value="1"/>
</dbReference>
<dbReference type="Pfam" id="PF00177">
    <property type="entry name" value="Ribosomal_S7"/>
    <property type="match status" value="1"/>
</dbReference>
<dbReference type="PIRSF" id="PIRSF002122">
    <property type="entry name" value="RPS7p_RPS7a_RPS5e_RPS7o"/>
    <property type="match status" value="1"/>
</dbReference>
<dbReference type="SUPFAM" id="SSF47973">
    <property type="entry name" value="Ribosomal protein S7"/>
    <property type="match status" value="1"/>
</dbReference>
<dbReference type="PROSITE" id="PS00052">
    <property type="entry name" value="RIBOSOMAL_S7"/>
    <property type="match status" value="1"/>
</dbReference>